<gene>
    <name evidence="1" type="primary">rplB</name>
    <name type="ordered locus">SPO0484</name>
</gene>
<dbReference type="EMBL" id="CP000031">
    <property type="protein sequence ID" value="AAV93801.1"/>
    <property type="molecule type" value="Genomic_DNA"/>
</dbReference>
<dbReference type="RefSeq" id="WP_011046244.1">
    <property type="nucleotide sequence ID" value="NC_003911.12"/>
</dbReference>
<dbReference type="SMR" id="Q5LW59"/>
<dbReference type="STRING" id="246200.SPO0484"/>
<dbReference type="PaxDb" id="246200-SPO0484"/>
<dbReference type="KEGG" id="sil:SPO0484"/>
<dbReference type="eggNOG" id="COG0090">
    <property type="taxonomic scope" value="Bacteria"/>
</dbReference>
<dbReference type="HOGENOM" id="CLU_036235_2_1_5"/>
<dbReference type="OrthoDB" id="9778722at2"/>
<dbReference type="Proteomes" id="UP000001023">
    <property type="component" value="Chromosome"/>
</dbReference>
<dbReference type="GO" id="GO:0015934">
    <property type="term" value="C:large ribosomal subunit"/>
    <property type="evidence" value="ECO:0007669"/>
    <property type="project" value="InterPro"/>
</dbReference>
<dbReference type="GO" id="GO:0019843">
    <property type="term" value="F:rRNA binding"/>
    <property type="evidence" value="ECO:0007669"/>
    <property type="project" value="UniProtKB-UniRule"/>
</dbReference>
<dbReference type="GO" id="GO:0003735">
    <property type="term" value="F:structural constituent of ribosome"/>
    <property type="evidence" value="ECO:0007669"/>
    <property type="project" value="InterPro"/>
</dbReference>
<dbReference type="GO" id="GO:0016740">
    <property type="term" value="F:transferase activity"/>
    <property type="evidence" value="ECO:0007669"/>
    <property type="project" value="InterPro"/>
</dbReference>
<dbReference type="GO" id="GO:0002181">
    <property type="term" value="P:cytoplasmic translation"/>
    <property type="evidence" value="ECO:0007669"/>
    <property type="project" value="TreeGrafter"/>
</dbReference>
<dbReference type="FunFam" id="2.30.30.30:FF:000001">
    <property type="entry name" value="50S ribosomal protein L2"/>
    <property type="match status" value="1"/>
</dbReference>
<dbReference type="FunFam" id="2.40.50.140:FF:000003">
    <property type="entry name" value="50S ribosomal protein L2"/>
    <property type="match status" value="1"/>
</dbReference>
<dbReference type="FunFam" id="4.10.950.10:FF:000001">
    <property type="entry name" value="50S ribosomal protein L2"/>
    <property type="match status" value="1"/>
</dbReference>
<dbReference type="Gene3D" id="2.30.30.30">
    <property type="match status" value="1"/>
</dbReference>
<dbReference type="Gene3D" id="2.40.50.140">
    <property type="entry name" value="Nucleic acid-binding proteins"/>
    <property type="match status" value="1"/>
</dbReference>
<dbReference type="Gene3D" id="4.10.950.10">
    <property type="entry name" value="Ribosomal protein L2, domain 3"/>
    <property type="match status" value="1"/>
</dbReference>
<dbReference type="HAMAP" id="MF_01320_B">
    <property type="entry name" value="Ribosomal_uL2_B"/>
    <property type="match status" value="1"/>
</dbReference>
<dbReference type="InterPro" id="IPR012340">
    <property type="entry name" value="NA-bd_OB-fold"/>
</dbReference>
<dbReference type="InterPro" id="IPR014722">
    <property type="entry name" value="Rib_uL2_dom2"/>
</dbReference>
<dbReference type="InterPro" id="IPR002171">
    <property type="entry name" value="Ribosomal_uL2"/>
</dbReference>
<dbReference type="InterPro" id="IPR005880">
    <property type="entry name" value="Ribosomal_uL2_bac/org-type"/>
</dbReference>
<dbReference type="InterPro" id="IPR022669">
    <property type="entry name" value="Ribosomal_uL2_C"/>
</dbReference>
<dbReference type="InterPro" id="IPR022671">
    <property type="entry name" value="Ribosomal_uL2_CS"/>
</dbReference>
<dbReference type="InterPro" id="IPR014726">
    <property type="entry name" value="Ribosomal_uL2_dom3"/>
</dbReference>
<dbReference type="InterPro" id="IPR022666">
    <property type="entry name" value="Ribosomal_uL2_RNA-bd_dom"/>
</dbReference>
<dbReference type="InterPro" id="IPR008991">
    <property type="entry name" value="Translation_prot_SH3-like_sf"/>
</dbReference>
<dbReference type="NCBIfam" id="TIGR01171">
    <property type="entry name" value="rplB_bact"/>
    <property type="match status" value="1"/>
</dbReference>
<dbReference type="PANTHER" id="PTHR13691:SF5">
    <property type="entry name" value="LARGE RIBOSOMAL SUBUNIT PROTEIN UL2M"/>
    <property type="match status" value="1"/>
</dbReference>
<dbReference type="PANTHER" id="PTHR13691">
    <property type="entry name" value="RIBOSOMAL PROTEIN L2"/>
    <property type="match status" value="1"/>
</dbReference>
<dbReference type="Pfam" id="PF00181">
    <property type="entry name" value="Ribosomal_L2"/>
    <property type="match status" value="1"/>
</dbReference>
<dbReference type="Pfam" id="PF03947">
    <property type="entry name" value="Ribosomal_L2_C"/>
    <property type="match status" value="1"/>
</dbReference>
<dbReference type="PIRSF" id="PIRSF002158">
    <property type="entry name" value="Ribosomal_L2"/>
    <property type="match status" value="1"/>
</dbReference>
<dbReference type="SMART" id="SM01383">
    <property type="entry name" value="Ribosomal_L2"/>
    <property type="match status" value="1"/>
</dbReference>
<dbReference type="SMART" id="SM01382">
    <property type="entry name" value="Ribosomal_L2_C"/>
    <property type="match status" value="1"/>
</dbReference>
<dbReference type="SUPFAM" id="SSF50249">
    <property type="entry name" value="Nucleic acid-binding proteins"/>
    <property type="match status" value="1"/>
</dbReference>
<dbReference type="SUPFAM" id="SSF50104">
    <property type="entry name" value="Translation proteins SH3-like domain"/>
    <property type="match status" value="1"/>
</dbReference>
<dbReference type="PROSITE" id="PS00467">
    <property type="entry name" value="RIBOSOMAL_L2"/>
    <property type="match status" value="1"/>
</dbReference>
<proteinExistence type="inferred from homology"/>
<accession>Q5LW59</accession>
<protein>
    <recommendedName>
        <fullName evidence="1">Large ribosomal subunit protein uL2</fullName>
    </recommendedName>
    <alternativeName>
        <fullName evidence="3">50S ribosomal protein L2</fullName>
    </alternativeName>
</protein>
<organism>
    <name type="scientific">Ruegeria pomeroyi (strain ATCC 700808 / DSM 15171 / DSS-3)</name>
    <name type="common">Silicibacter pomeroyi</name>
    <dbReference type="NCBI Taxonomy" id="246200"/>
    <lineage>
        <taxon>Bacteria</taxon>
        <taxon>Pseudomonadati</taxon>
        <taxon>Pseudomonadota</taxon>
        <taxon>Alphaproteobacteria</taxon>
        <taxon>Rhodobacterales</taxon>
        <taxon>Roseobacteraceae</taxon>
        <taxon>Ruegeria</taxon>
    </lineage>
</organism>
<reference key="1">
    <citation type="journal article" date="2004" name="Nature">
        <title>Genome sequence of Silicibacter pomeroyi reveals adaptations to the marine environment.</title>
        <authorList>
            <person name="Moran M.A."/>
            <person name="Buchan A."/>
            <person name="Gonzalez J.M."/>
            <person name="Heidelberg J.F."/>
            <person name="Whitman W.B."/>
            <person name="Kiene R.P."/>
            <person name="Henriksen J.R."/>
            <person name="King G.M."/>
            <person name="Belas R."/>
            <person name="Fuqua C."/>
            <person name="Brinkac L.M."/>
            <person name="Lewis M."/>
            <person name="Johri S."/>
            <person name="Weaver B."/>
            <person name="Pai G."/>
            <person name="Eisen J.A."/>
            <person name="Rahe E."/>
            <person name="Sheldon W.M."/>
            <person name="Ye W."/>
            <person name="Miller T.R."/>
            <person name="Carlton J."/>
            <person name="Rasko D.A."/>
            <person name="Paulsen I.T."/>
            <person name="Ren Q."/>
            <person name="Daugherty S.C."/>
            <person name="DeBoy R.T."/>
            <person name="Dodson R.J."/>
            <person name="Durkin A.S."/>
            <person name="Madupu R."/>
            <person name="Nelson W.C."/>
            <person name="Sullivan S.A."/>
            <person name="Rosovitz M.J."/>
            <person name="Haft D.H."/>
            <person name="Selengut J."/>
            <person name="Ward N."/>
        </authorList>
    </citation>
    <scope>NUCLEOTIDE SEQUENCE [LARGE SCALE GENOMIC DNA]</scope>
    <source>
        <strain>ATCC 700808 / DSM 15171 / DSS-3</strain>
    </source>
</reference>
<reference key="2">
    <citation type="journal article" date="2014" name="Stand. Genomic Sci.">
        <title>An updated genome annotation for the model marine bacterium Ruegeria pomeroyi DSS-3.</title>
        <authorList>
            <person name="Rivers A.R."/>
            <person name="Smith C.B."/>
            <person name="Moran M.A."/>
        </authorList>
    </citation>
    <scope>GENOME REANNOTATION</scope>
    <source>
        <strain>ATCC 700808 / DSM 15171 / DSS-3</strain>
    </source>
</reference>
<name>RL2_RUEPO</name>
<feature type="chain" id="PRO_0000237243" description="Large ribosomal subunit protein uL2">
    <location>
        <begin position="1"/>
        <end position="280"/>
    </location>
</feature>
<feature type="region of interest" description="Disordered" evidence="2">
    <location>
        <begin position="33"/>
        <end position="55"/>
    </location>
</feature>
<feature type="region of interest" description="Disordered" evidence="2">
    <location>
        <begin position="224"/>
        <end position="266"/>
    </location>
</feature>
<feature type="compositionally biased region" description="Basic residues" evidence="2">
    <location>
        <begin position="256"/>
        <end position="266"/>
    </location>
</feature>
<evidence type="ECO:0000255" key="1">
    <source>
        <dbReference type="HAMAP-Rule" id="MF_01320"/>
    </source>
</evidence>
<evidence type="ECO:0000256" key="2">
    <source>
        <dbReference type="SAM" id="MobiDB-lite"/>
    </source>
</evidence>
<evidence type="ECO:0000305" key="3"/>
<keyword id="KW-1185">Reference proteome</keyword>
<keyword id="KW-0687">Ribonucleoprotein</keyword>
<keyword id="KW-0689">Ribosomal protein</keyword>
<keyword id="KW-0694">RNA-binding</keyword>
<keyword id="KW-0699">rRNA-binding</keyword>
<sequence>MALKSYKPTTPGQRGLVLIDRSELWKGRPVKSLTEGLTKSGGRNNTGRITSRRRGGGAKRLYRIVDFKRNKFDVAATVERIEYDPNRTAFIALIKYEDGEQAYILAPQRLAVGDKVVASAKADIKPGNAMPFSGMPIGTIVHNIEMKPGKGGQIARAAGTYAQFVGRDGGYAQIRLSSGELRMVRQECMATVGAVSNPDNSNQNYGKAGRMRHKGIRPSVRGVAMNPIDHPHGGGEGRTSGGRTPVTPWGKDTKGTRTRNKNKASQKLIIRSRHAKKKGR</sequence>
<comment type="function">
    <text evidence="1">One of the primary rRNA binding proteins. Required for association of the 30S and 50S subunits to form the 70S ribosome, for tRNA binding and peptide bond formation. It has been suggested to have peptidyltransferase activity; this is somewhat controversial. Makes several contacts with the 16S rRNA in the 70S ribosome.</text>
</comment>
<comment type="subunit">
    <text evidence="1">Part of the 50S ribosomal subunit. Forms a bridge to the 30S subunit in the 70S ribosome.</text>
</comment>
<comment type="similarity">
    <text evidence="1">Belongs to the universal ribosomal protein uL2 family.</text>
</comment>